<protein>
    <recommendedName>
        <fullName evidence="1">Large ribosomal subunit protein bL28</fullName>
    </recommendedName>
    <alternativeName>
        <fullName evidence="2">50S ribosomal protein L28</fullName>
    </alternativeName>
</protein>
<evidence type="ECO:0000255" key="1">
    <source>
        <dbReference type="HAMAP-Rule" id="MF_00373"/>
    </source>
</evidence>
<evidence type="ECO:0000305" key="2"/>
<keyword id="KW-1185">Reference proteome</keyword>
<keyword id="KW-0687">Ribonucleoprotein</keyword>
<keyword id="KW-0689">Ribosomal protein</keyword>
<name>RL28_ALKMQ</name>
<reference key="1">
    <citation type="journal article" date="2016" name="Genome Announc.">
        <title>Complete genome sequence of Alkaliphilus metalliredigens strain QYMF, an alkaliphilic and metal-reducing bacterium isolated from borax-contaminated leachate ponds.</title>
        <authorList>
            <person name="Hwang C."/>
            <person name="Copeland A."/>
            <person name="Lucas S."/>
            <person name="Lapidus A."/>
            <person name="Barry K."/>
            <person name="Detter J.C."/>
            <person name="Glavina Del Rio T."/>
            <person name="Hammon N."/>
            <person name="Israni S."/>
            <person name="Dalin E."/>
            <person name="Tice H."/>
            <person name="Pitluck S."/>
            <person name="Chertkov O."/>
            <person name="Brettin T."/>
            <person name="Bruce D."/>
            <person name="Han C."/>
            <person name="Schmutz J."/>
            <person name="Larimer F."/>
            <person name="Land M.L."/>
            <person name="Hauser L."/>
            <person name="Kyrpides N."/>
            <person name="Mikhailova N."/>
            <person name="Ye Q."/>
            <person name="Zhou J."/>
            <person name="Richardson P."/>
            <person name="Fields M.W."/>
        </authorList>
    </citation>
    <scope>NUCLEOTIDE SEQUENCE [LARGE SCALE GENOMIC DNA]</scope>
    <source>
        <strain>QYMF</strain>
    </source>
</reference>
<sequence>MARVCDVCQKGKVSGNQVSHSNRHNRRTWTPNLRKVRAIVKGTPKRLKVCTRCLRSGKVERAL</sequence>
<proteinExistence type="inferred from homology"/>
<gene>
    <name evidence="1" type="primary">rpmB</name>
    <name type="ordered locus">Amet_2773</name>
</gene>
<accession>A6TRV6</accession>
<feature type="chain" id="PRO_1000059945" description="Large ribosomal subunit protein bL28">
    <location>
        <begin position="1"/>
        <end position="63"/>
    </location>
</feature>
<dbReference type="EMBL" id="CP000724">
    <property type="protein sequence ID" value="ABR48924.1"/>
    <property type="molecule type" value="Genomic_DNA"/>
</dbReference>
<dbReference type="RefSeq" id="WP_012063896.1">
    <property type="nucleotide sequence ID" value="NC_009633.1"/>
</dbReference>
<dbReference type="SMR" id="A6TRV6"/>
<dbReference type="STRING" id="293826.Amet_2773"/>
<dbReference type="KEGG" id="amt:Amet_2773"/>
<dbReference type="eggNOG" id="COG0227">
    <property type="taxonomic scope" value="Bacteria"/>
</dbReference>
<dbReference type="HOGENOM" id="CLU_064548_7_0_9"/>
<dbReference type="OrthoDB" id="9805609at2"/>
<dbReference type="Proteomes" id="UP000001572">
    <property type="component" value="Chromosome"/>
</dbReference>
<dbReference type="GO" id="GO:1990904">
    <property type="term" value="C:ribonucleoprotein complex"/>
    <property type="evidence" value="ECO:0007669"/>
    <property type="project" value="UniProtKB-KW"/>
</dbReference>
<dbReference type="GO" id="GO:0005840">
    <property type="term" value="C:ribosome"/>
    <property type="evidence" value="ECO:0007669"/>
    <property type="project" value="UniProtKB-KW"/>
</dbReference>
<dbReference type="GO" id="GO:0003735">
    <property type="term" value="F:structural constituent of ribosome"/>
    <property type="evidence" value="ECO:0007669"/>
    <property type="project" value="InterPro"/>
</dbReference>
<dbReference type="GO" id="GO:0006412">
    <property type="term" value="P:translation"/>
    <property type="evidence" value="ECO:0007669"/>
    <property type="project" value="UniProtKB-UniRule"/>
</dbReference>
<dbReference type="Gene3D" id="2.30.170.40">
    <property type="entry name" value="Ribosomal protein L28/L24"/>
    <property type="match status" value="1"/>
</dbReference>
<dbReference type="HAMAP" id="MF_00373">
    <property type="entry name" value="Ribosomal_bL28"/>
    <property type="match status" value="1"/>
</dbReference>
<dbReference type="InterPro" id="IPR050096">
    <property type="entry name" value="Bacterial_rp_bL28"/>
</dbReference>
<dbReference type="InterPro" id="IPR026569">
    <property type="entry name" value="Ribosomal_bL28"/>
</dbReference>
<dbReference type="InterPro" id="IPR034704">
    <property type="entry name" value="Ribosomal_bL28/bL31-like_sf"/>
</dbReference>
<dbReference type="InterPro" id="IPR001383">
    <property type="entry name" value="Ribosomal_bL28_bact-type"/>
</dbReference>
<dbReference type="InterPro" id="IPR037147">
    <property type="entry name" value="Ribosomal_bL28_sf"/>
</dbReference>
<dbReference type="NCBIfam" id="TIGR00009">
    <property type="entry name" value="L28"/>
    <property type="match status" value="1"/>
</dbReference>
<dbReference type="PANTHER" id="PTHR39080">
    <property type="entry name" value="50S RIBOSOMAL PROTEIN L28"/>
    <property type="match status" value="1"/>
</dbReference>
<dbReference type="PANTHER" id="PTHR39080:SF1">
    <property type="entry name" value="LARGE RIBOSOMAL SUBUNIT PROTEIN BL28A"/>
    <property type="match status" value="1"/>
</dbReference>
<dbReference type="Pfam" id="PF00830">
    <property type="entry name" value="Ribosomal_L28"/>
    <property type="match status" value="1"/>
</dbReference>
<dbReference type="SUPFAM" id="SSF143800">
    <property type="entry name" value="L28p-like"/>
    <property type="match status" value="1"/>
</dbReference>
<organism>
    <name type="scientific">Alkaliphilus metalliredigens (strain QYMF)</name>
    <dbReference type="NCBI Taxonomy" id="293826"/>
    <lineage>
        <taxon>Bacteria</taxon>
        <taxon>Bacillati</taxon>
        <taxon>Bacillota</taxon>
        <taxon>Clostridia</taxon>
        <taxon>Peptostreptococcales</taxon>
        <taxon>Natronincolaceae</taxon>
        <taxon>Alkaliphilus</taxon>
    </lineage>
</organism>
<comment type="similarity">
    <text evidence="1">Belongs to the bacterial ribosomal protein bL28 family.</text>
</comment>